<reference key="1">
    <citation type="journal article" date="2008" name="Nat. Biotechnol.">
        <title>Genome sequencing and analysis of the filamentous fungus Penicillium chrysogenum.</title>
        <authorList>
            <person name="van den Berg M.A."/>
            <person name="Albang R."/>
            <person name="Albermann K."/>
            <person name="Badger J.H."/>
            <person name="Daran J.-M."/>
            <person name="Driessen A.J.M."/>
            <person name="Garcia-Estrada C."/>
            <person name="Fedorova N.D."/>
            <person name="Harris D.M."/>
            <person name="Heijne W.H.M."/>
            <person name="Joardar V.S."/>
            <person name="Kiel J.A.K.W."/>
            <person name="Kovalchuk A."/>
            <person name="Martin J.F."/>
            <person name="Nierman W.C."/>
            <person name="Nijland J.G."/>
            <person name="Pronk J.T."/>
            <person name="Roubos J.A."/>
            <person name="van der Klei I.J."/>
            <person name="van Peij N.N.M.E."/>
            <person name="Veenhuis M."/>
            <person name="von Doehren H."/>
            <person name="Wagner C."/>
            <person name="Wortman J.R."/>
            <person name="Bovenberg R.A.L."/>
        </authorList>
    </citation>
    <scope>NUCLEOTIDE SEQUENCE [LARGE SCALE GENOMIC DNA]</scope>
    <source>
        <strain>ATCC 28089 / DSM 1075 / NRRL 1951 / Wisconsin 54-1255</strain>
    </source>
</reference>
<protein>
    <recommendedName>
        <fullName>Probable Xaa-Pro aminopeptidase pepP</fullName>
        <ecNumber>3.4.11.9</ecNumber>
    </recommendedName>
    <alternativeName>
        <fullName>Aminoacylproline aminopeptidase</fullName>
    </alternativeName>
    <alternativeName>
        <fullName>Prolidase</fullName>
    </alternativeName>
</protein>
<gene>
    <name type="primary">pepP</name>
    <name type="ORF">Pc13g05440</name>
</gene>
<organism>
    <name type="scientific">Penicillium rubens (strain ATCC 28089 / DSM 1075 / NRRL 1951 / Wisconsin 54-1255)</name>
    <name type="common">Penicillium chrysogenum</name>
    <dbReference type="NCBI Taxonomy" id="500485"/>
    <lineage>
        <taxon>Eukaryota</taxon>
        <taxon>Fungi</taxon>
        <taxon>Dikarya</taxon>
        <taxon>Ascomycota</taxon>
        <taxon>Pezizomycotina</taxon>
        <taxon>Eurotiomycetes</taxon>
        <taxon>Eurotiomycetidae</taxon>
        <taxon>Eurotiales</taxon>
        <taxon>Aspergillaceae</taxon>
        <taxon>Penicillium</taxon>
        <taxon>Penicillium chrysogenum species complex</taxon>
    </lineage>
</organism>
<comment type="function">
    <text evidence="1">Catalyzes the removal of a penultimate prolyl residue from the N-termini of peptides.</text>
</comment>
<comment type="catalytic activity">
    <reaction>
        <text>Release of any N-terminal amino acid, including proline, that is linked to proline, even from a dipeptide or tripeptide.</text>
        <dbReference type="EC" id="3.4.11.9"/>
    </reaction>
</comment>
<comment type="cofactor">
    <cofactor evidence="1">
        <name>Mn(2+)</name>
        <dbReference type="ChEBI" id="CHEBI:29035"/>
    </cofactor>
    <text evidence="1">Binds 2 manganese ions per subunit.</text>
</comment>
<comment type="similarity">
    <text evidence="2">Belongs to the peptidase M24B family.</text>
</comment>
<feature type="chain" id="PRO_0000411882" description="Probable Xaa-Pro aminopeptidase pepP">
    <location>
        <begin position="1"/>
        <end position="465"/>
    </location>
</feature>
<feature type="binding site" evidence="1">
    <location>
        <position position="263"/>
    </location>
    <ligand>
        <name>Mn(2+)</name>
        <dbReference type="ChEBI" id="CHEBI:29035"/>
        <label>2</label>
    </ligand>
</feature>
<feature type="binding site" evidence="1">
    <location>
        <position position="274"/>
    </location>
    <ligand>
        <name>Mn(2+)</name>
        <dbReference type="ChEBI" id="CHEBI:29035"/>
        <label>1</label>
    </ligand>
</feature>
<feature type="binding site" evidence="1">
    <location>
        <position position="274"/>
    </location>
    <ligand>
        <name>Mn(2+)</name>
        <dbReference type="ChEBI" id="CHEBI:29035"/>
        <label>2</label>
    </ligand>
</feature>
<feature type="binding site" evidence="1">
    <location>
        <position position="397"/>
    </location>
    <ligand>
        <name>Mn(2+)</name>
        <dbReference type="ChEBI" id="CHEBI:29035"/>
        <label>1</label>
    </ligand>
</feature>
<feature type="binding site" evidence="1">
    <location>
        <position position="437"/>
    </location>
    <ligand>
        <name>Mn(2+)</name>
        <dbReference type="ChEBI" id="CHEBI:29035"/>
        <label>1</label>
    </ligand>
</feature>
<feature type="binding site" evidence="1">
    <location>
        <position position="437"/>
    </location>
    <ligand>
        <name>Mn(2+)</name>
        <dbReference type="ChEBI" id="CHEBI:29035"/>
        <label>2</label>
    </ligand>
</feature>
<accession>B6H2M0</accession>
<evidence type="ECO:0000250" key="1"/>
<evidence type="ECO:0000305" key="2"/>
<name>AMPP3_PENRW</name>
<dbReference type="EC" id="3.4.11.9"/>
<dbReference type="EMBL" id="AM920428">
    <property type="protein sequence ID" value="CAP91613.1"/>
    <property type="molecule type" value="Genomic_DNA"/>
</dbReference>
<dbReference type="RefSeq" id="XP_002558978.1">
    <property type="nucleotide sequence ID" value="XM_002558932.1"/>
</dbReference>
<dbReference type="SMR" id="B6H2M0"/>
<dbReference type="STRING" id="500485.B6H2M0"/>
<dbReference type="GeneID" id="8317336"/>
<dbReference type="KEGG" id="pcs:N7525_003616"/>
<dbReference type="VEuPathDB" id="FungiDB:PCH_Pc13g05440"/>
<dbReference type="eggNOG" id="KOG2737">
    <property type="taxonomic scope" value="Eukaryota"/>
</dbReference>
<dbReference type="HOGENOM" id="CLU_017266_1_2_1"/>
<dbReference type="OMA" id="DAHALFF"/>
<dbReference type="OrthoDB" id="10261878at2759"/>
<dbReference type="BioCyc" id="PCHR:PC13G05440-MONOMER"/>
<dbReference type="Proteomes" id="UP000000724">
    <property type="component" value="Contig Pc00c13"/>
</dbReference>
<dbReference type="GO" id="GO:0030145">
    <property type="term" value="F:manganese ion binding"/>
    <property type="evidence" value="ECO:0007669"/>
    <property type="project" value="InterPro"/>
</dbReference>
<dbReference type="GO" id="GO:0070006">
    <property type="term" value="F:metalloaminopeptidase activity"/>
    <property type="evidence" value="ECO:0007669"/>
    <property type="project" value="InterPro"/>
</dbReference>
<dbReference type="GO" id="GO:0006508">
    <property type="term" value="P:proteolysis"/>
    <property type="evidence" value="ECO:0007669"/>
    <property type="project" value="UniProtKB-KW"/>
</dbReference>
<dbReference type="CDD" id="cd01087">
    <property type="entry name" value="Prolidase"/>
    <property type="match status" value="1"/>
</dbReference>
<dbReference type="FunFam" id="3.90.230.10:FF:000002">
    <property type="entry name" value="Xaa-Pro aminopeptidase 3"/>
    <property type="match status" value="1"/>
</dbReference>
<dbReference type="Gene3D" id="3.90.230.10">
    <property type="entry name" value="Creatinase/methionine aminopeptidase superfamily"/>
    <property type="match status" value="1"/>
</dbReference>
<dbReference type="Gene3D" id="3.40.350.10">
    <property type="entry name" value="Creatinase/prolidase N-terminal domain"/>
    <property type="match status" value="1"/>
</dbReference>
<dbReference type="InterPro" id="IPR007865">
    <property type="entry name" value="Aminopep_P_N"/>
</dbReference>
<dbReference type="InterPro" id="IPR029149">
    <property type="entry name" value="Creatin/AminoP/Spt16_N"/>
</dbReference>
<dbReference type="InterPro" id="IPR036005">
    <property type="entry name" value="Creatinase/aminopeptidase-like"/>
</dbReference>
<dbReference type="InterPro" id="IPR000994">
    <property type="entry name" value="Pept_M24"/>
</dbReference>
<dbReference type="InterPro" id="IPR052433">
    <property type="entry name" value="X-Pro_dipept-like"/>
</dbReference>
<dbReference type="PANTHER" id="PTHR43226">
    <property type="entry name" value="XAA-PRO AMINOPEPTIDASE 3"/>
    <property type="match status" value="1"/>
</dbReference>
<dbReference type="PANTHER" id="PTHR43226:SF1">
    <property type="entry name" value="XAA-PRO DIPEPTIDASE"/>
    <property type="match status" value="1"/>
</dbReference>
<dbReference type="Pfam" id="PF05195">
    <property type="entry name" value="AMP_N"/>
    <property type="match status" value="1"/>
</dbReference>
<dbReference type="Pfam" id="PF00557">
    <property type="entry name" value="Peptidase_M24"/>
    <property type="match status" value="1"/>
</dbReference>
<dbReference type="SMART" id="SM01011">
    <property type="entry name" value="AMP_N"/>
    <property type="match status" value="1"/>
</dbReference>
<dbReference type="SUPFAM" id="SSF55920">
    <property type="entry name" value="Creatinase/aminopeptidase"/>
    <property type="match status" value="1"/>
</dbReference>
<dbReference type="SUPFAM" id="SSF53092">
    <property type="entry name" value="Creatinase/prolidase N-terminal domain"/>
    <property type="match status" value="1"/>
</dbReference>
<keyword id="KW-0031">Aminopeptidase</keyword>
<keyword id="KW-0378">Hydrolase</keyword>
<keyword id="KW-0464">Manganese</keyword>
<keyword id="KW-0479">Metal-binding</keyword>
<keyword id="KW-0482">Metalloprotease</keyword>
<keyword id="KW-0645">Protease</keyword>
<keyword id="KW-1185">Reference proteome</keyword>
<sequence>MTTVDTILAAKYPAKAHALRVSESLKARHGGAGVIYLEAQKTRLIEDSDEDMPFRQRRPFFYLTGCLLPDAAVVYDAVKDELTLFIPPINPESVIWSGLPLSPEEAAKLYDVDRVLFTTDVNSTLASIASSHNGQTAAFAIAEQVSEGTSFQGFAETNTTSLKTAIEETRVIKDAYEVALLRKANDISTKAHVAAIHASKTATNERQIEAAIIGACIANGCREQSYHPIVAGGEGGATLHYVRNDVDLVDPVTKQRKNNVLIDAGGEYQTYCADITRVIPLNGRFAPETRQIYEIVLQMQTECIAMLKEGVCWDDVHALAHRIAIRGLLKLGILRGSEDELFEKRVSVAFFPHGLGHYLGMDTHDTGGNPNYEDKDTMFRYLRVRANLPAGSVVTVEPGIYFCRFIIDPILKAPETGKYIDTEVLERYWSVGGVRIEDNIHITKDGSENLTTAPKSIEEVESLAL</sequence>
<proteinExistence type="inferred from homology"/>